<organism>
    <name type="scientific">Nitrosopumilus maritimus (strain SCM1)</name>
    <dbReference type="NCBI Taxonomy" id="436308"/>
    <lineage>
        <taxon>Archaea</taxon>
        <taxon>Nitrososphaerota</taxon>
        <taxon>Nitrososphaeria</taxon>
        <taxon>Nitrosopumilales</taxon>
        <taxon>Nitrosopumilaceae</taxon>
        <taxon>Nitrosopumilus</taxon>
    </lineage>
</organism>
<comment type="similarity">
    <text evidence="1">Belongs to the SUI1 family.</text>
</comment>
<gene>
    <name type="ordered locus">Nmar_0622</name>
</gene>
<keyword id="KW-0648">Protein biosynthesis</keyword>
<keyword id="KW-1185">Reference proteome</keyword>
<keyword id="KW-0810">Translation regulation</keyword>
<name>SUI1_NITMS</name>
<evidence type="ECO:0000255" key="1">
    <source>
        <dbReference type="HAMAP-Rule" id="MF_00604"/>
    </source>
</evidence>
<sequence>MAVICNTCGLPEDLCACGELAKDSTKIIIRLETRRFKKKGTMIEGLDPKLNNLETVAKELKSKYACGGTAKEGYIFLQGDHRDTIKDTLTDLGFAEESIELH</sequence>
<proteinExistence type="inferred from homology"/>
<accession>A9A389</accession>
<dbReference type="EMBL" id="CP000866">
    <property type="protein sequence ID" value="ABX12518.1"/>
    <property type="molecule type" value="Genomic_DNA"/>
</dbReference>
<dbReference type="RefSeq" id="WP_012215005.1">
    <property type="nucleotide sequence ID" value="NC_010085.1"/>
</dbReference>
<dbReference type="SMR" id="A9A389"/>
<dbReference type="STRING" id="436308.Nmar_0622"/>
<dbReference type="EnsemblBacteria" id="ABX12518">
    <property type="protein sequence ID" value="ABX12518"/>
    <property type="gene ID" value="Nmar_0622"/>
</dbReference>
<dbReference type="GeneID" id="5774226"/>
<dbReference type="KEGG" id="nmr:Nmar_0622"/>
<dbReference type="eggNOG" id="arCOG04223">
    <property type="taxonomic scope" value="Archaea"/>
</dbReference>
<dbReference type="HOGENOM" id="CLU_082805_6_1_2"/>
<dbReference type="InParanoid" id="A9A389"/>
<dbReference type="OrthoDB" id="11182at2157"/>
<dbReference type="PhylomeDB" id="A9A389"/>
<dbReference type="Proteomes" id="UP000000792">
    <property type="component" value="Chromosome"/>
</dbReference>
<dbReference type="GO" id="GO:0003743">
    <property type="term" value="F:translation initiation factor activity"/>
    <property type="evidence" value="ECO:0007669"/>
    <property type="project" value="InterPro"/>
</dbReference>
<dbReference type="GO" id="GO:0001731">
    <property type="term" value="P:formation of translation preinitiation complex"/>
    <property type="evidence" value="ECO:0000318"/>
    <property type="project" value="GO_Central"/>
</dbReference>
<dbReference type="GO" id="GO:0006417">
    <property type="term" value="P:regulation of translation"/>
    <property type="evidence" value="ECO:0007669"/>
    <property type="project" value="UniProtKB-UniRule"/>
</dbReference>
<dbReference type="GO" id="GO:0002188">
    <property type="term" value="P:translation reinitiation"/>
    <property type="evidence" value="ECO:0000318"/>
    <property type="project" value="GO_Central"/>
</dbReference>
<dbReference type="CDD" id="cd11567">
    <property type="entry name" value="YciH_like"/>
    <property type="match status" value="1"/>
</dbReference>
<dbReference type="FunFam" id="3.30.780.10:FF:000017">
    <property type="entry name" value="Protein translation factor SUI1 homolog"/>
    <property type="match status" value="1"/>
</dbReference>
<dbReference type="Gene3D" id="3.30.780.10">
    <property type="entry name" value="SUI1-like domain"/>
    <property type="match status" value="1"/>
</dbReference>
<dbReference type="HAMAP" id="MF_00604">
    <property type="entry name" value="SUI1"/>
    <property type="match status" value="1"/>
</dbReference>
<dbReference type="InterPro" id="IPR050318">
    <property type="entry name" value="DENR/SUI1_TIF"/>
</dbReference>
<dbReference type="InterPro" id="IPR001950">
    <property type="entry name" value="SUI1"/>
</dbReference>
<dbReference type="InterPro" id="IPR022851">
    <property type="entry name" value="SUI1_arc"/>
</dbReference>
<dbReference type="InterPro" id="IPR005872">
    <property type="entry name" value="SUI1_arc_bac"/>
</dbReference>
<dbReference type="InterPro" id="IPR036877">
    <property type="entry name" value="SUI1_dom_sf"/>
</dbReference>
<dbReference type="NCBIfam" id="NF002096">
    <property type="entry name" value="PRK00939.1"/>
    <property type="match status" value="1"/>
</dbReference>
<dbReference type="PANTHER" id="PTHR12789:SF0">
    <property type="entry name" value="DENSITY-REGULATED PROTEIN"/>
    <property type="match status" value="1"/>
</dbReference>
<dbReference type="PANTHER" id="PTHR12789">
    <property type="entry name" value="DENSITY-REGULATED PROTEIN HOMOLOG"/>
    <property type="match status" value="1"/>
</dbReference>
<dbReference type="Pfam" id="PF01253">
    <property type="entry name" value="SUI1"/>
    <property type="match status" value="1"/>
</dbReference>
<dbReference type="PIRSF" id="PIRSF037511">
    <property type="entry name" value="Transl_init_SUI1_pro"/>
    <property type="match status" value="1"/>
</dbReference>
<dbReference type="SUPFAM" id="SSF55159">
    <property type="entry name" value="eIF1-like"/>
    <property type="match status" value="1"/>
</dbReference>
<dbReference type="PROSITE" id="PS50296">
    <property type="entry name" value="SUI1"/>
    <property type="match status" value="1"/>
</dbReference>
<protein>
    <recommendedName>
        <fullName evidence="1">Protein translation factor SUI1 homolog</fullName>
    </recommendedName>
</protein>
<feature type="chain" id="PRO_1000130116" description="Protein translation factor SUI1 homolog">
    <location>
        <begin position="1"/>
        <end position="102"/>
    </location>
</feature>
<reference key="1">
    <citation type="journal article" date="2010" name="Proc. Natl. Acad. Sci. U.S.A.">
        <title>Nitrosopumilus maritimus genome reveals unique mechanisms for nitrification and autotrophy in globally distributed marine crenarchaea.</title>
        <authorList>
            <person name="Walker C.B."/>
            <person name="de la Torre J.R."/>
            <person name="Klotz M.G."/>
            <person name="Urakawa H."/>
            <person name="Pinel N."/>
            <person name="Arp D.J."/>
            <person name="Brochier-Armanet C."/>
            <person name="Chain P.S."/>
            <person name="Chan P.P."/>
            <person name="Gollabgir A."/>
            <person name="Hemp J."/>
            <person name="Hugler M."/>
            <person name="Karr E.A."/>
            <person name="Konneke M."/>
            <person name="Shin M."/>
            <person name="Lawton T.J."/>
            <person name="Lowe T."/>
            <person name="Martens-Habbena W."/>
            <person name="Sayavedra-Soto L.A."/>
            <person name="Lang D."/>
            <person name="Sievert S.M."/>
            <person name="Rosenzweig A.C."/>
            <person name="Manning G."/>
            <person name="Stahl D.A."/>
        </authorList>
    </citation>
    <scope>NUCLEOTIDE SEQUENCE [LARGE SCALE GENOMIC DNA]</scope>
    <source>
        <strain>SCM1</strain>
    </source>
</reference>